<proteinExistence type="inferred from homology"/>
<name>CLCA_ECO7I</name>
<keyword id="KW-0050">Antiport</keyword>
<keyword id="KW-0997">Cell inner membrane</keyword>
<keyword id="KW-1003">Cell membrane</keyword>
<keyword id="KW-0868">Chloride</keyword>
<keyword id="KW-0406">Ion transport</keyword>
<keyword id="KW-0472">Membrane</keyword>
<keyword id="KW-0812">Transmembrane</keyword>
<keyword id="KW-1133">Transmembrane helix</keyword>
<keyword id="KW-0813">Transport</keyword>
<sequence>MKTDTPSLETPQAARLRRRQLIRQLLERDKTPLAILFMAAVVGTLVGLAAVAFDKGVAWLQNQRMGALVHTADNYPLLLTVAFLCSAVLAMFGYFLVRKYAPEAGGSGIPEIEGALEDQRPVRWWRVLPVKFFGGLGTLGGGMVLGREGPTVQIGGNIGRMVLDVFRLKGDEARHTLLATGAAAGLAAAFNAPLAGILFIIEEMRPQFRYTLISIKAVFIGVIMSTIMYRIFNHEVALIDVGKLSDAPLNTLWLYLILGIIFGIFGPIFNKWVLGMQDLLHRVHGGNITKWVLMGGAIGGLCGLLGFVAPATSGGGFNLIPIATAGNFSMGMLVFIFVARVITTLLCFSSGAPGGIFAPMLALGTVLGTAFGMVAVELFPQYHLEAGTFAIAGMGALLAASIRAPLTGIILVLEMTDNYQLILPMIITGLGATLLAQFTGGKPLYSAILARTLAKQEAEQLARSKAASASENT</sequence>
<comment type="function">
    <text evidence="1">Proton-coupled chloride transporter. Functions as antiport system and exchanges two chloride ions for 1 proton. Probably acts as an electrical shunt for an outwardly-directed proton pump that is linked to amino acid decarboxylation, as part of the extreme acid resistance (XAR) response.</text>
</comment>
<comment type="catalytic activity">
    <reaction evidence="1">
        <text>2 chloride(in) + H(+)(out) = 2 chloride(out) + H(+)(in)</text>
        <dbReference type="Rhea" id="RHEA:29567"/>
        <dbReference type="ChEBI" id="CHEBI:15378"/>
        <dbReference type="ChEBI" id="CHEBI:17996"/>
    </reaction>
</comment>
<comment type="subunit">
    <text evidence="1">Homodimer.</text>
</comment>
<comment type="subcellular location">
    <subcellularLocation>
        <location evidence="1">Cell inner membrane</location>
        <topology evidence="1">Multi-pass membrane protein</topology>
    </subcellularLocation>
</comment>
<comment type="similarity">
    <text evidence="1">Belongs to the chloride channel (TC 2.A.49) family. ClcA subfamily.</text>
</comment>
<dbReference type="EMBL" id="CU928164">
    <property type="protein sequence ID" value="CAR16299.1"/>
    <property type="molecule type" value="Genomic_DNA"/>
</dbReference>
<dbReference type="RefSeq" id="WP_000845408.1">
    <property type="nucleotide sequence ID" value="NC_011750.1"/>
</dbReference>
<dbReference type="RefSeq" id="YP_002406205.1">
    <property type="nucleotide sequence ID" value="NC_011750.1"/>
</dbReference>
<dbReference type="SMR" id="B7NIB8"/>
<dbReference type="STRING" id="585057.ECIAI39_0159"/>
<dbReference type="KEGG" id="ect:ECIAI39_0159"/>
<dbReference type="PATRIC" id="fig|585057.6.peg.172"/>
<dbReference type="HOGENOM" id="CLU_015263_7_0_6"/>
<dbReference type="Proteomes" id="UP000000749">
    <property type="component" value="Chromosome"/>
</dbReference>
<dbReference type="GO" id="GO:0005886">
    <property type="term" value="C:plasma membrane"/>
    <property type="evidence" value="ECO:0007669"/>
    <property type="project" value="UniProtKB-SubCell"/>
</dbReference>
<dbReference type="GO" id="GO:0015297">
    <property type="term" value="F:antiporter activity"/>
    <property type="evidence" value="ECO:0007669"/>
    <property type="project" value="UniProtKB-UniRule"/>
</dbReference>
<dbReference type="GO" id="GO:0005247">
    <property type="term" value="F:voltage-gated chloride channel activity"/>
    <property type="evidence" value="ECO:0007669"/>
    <property type="project" value="TreeGrafter"/>
</dbReference>
<dbReference type="CDD" id="cd01031">
    <property type="entry name" value="EriC"/>
    <property type="match status" value="1"/>
</dbReference>
<dbReference type="FunFam" id="1.10.3080.10:FF:000005">
    <property type="entry name" value="H(+)/Cl(-) exchange transporter ClcA"/>
    <property type="match status" value="1"/>
</dbReference>
<dbReference type="Gene3D" id="1.10.3080.10">
    <property type="entry name" value="Clc chloride channel"/>
    <property type="match status" value="1"/>
</dbReference>
<dbReference type="HAMAP" id="MF_01128">
    <property type="entry name" value="CLC_ClcA"/>
    <property type="match status" value="1"/>
</dbReference>
<dbReference type="InterPro" id="IPR023861">
    <property type="entry name" value="Cl-channel_ClcA"/>
</dbReference>
<dbReference type="InterPro" id="IPR014743">
    <property type="entry name" value="Cl-channel_core"/>
</dbReference>
<dbReference type="InterPro" id="IPR001807">
    <property type="entry name" value="ClC"/>
</dbReference>
<dbReference type="NCBIfam" id="NF003640">
    <property type="entry name" value="PRK05277.1"/>
    <property type="match status" value="1"/>
</dbReference>
<dbReference type="PANTHER" id="PTHR45711">
    <property type="entry name" value="CHLORIDE CHANNEL PROTEIN"/>
    <property type="match status" value="1"/>
</dbReference>
<dbReference type="PANTHER" id="PTHR45711:SF6">
    <property type="entry name" value="CHLORIDE CHANNEL PROTEIN"/>
    <property type="match status" value="1"/>
</dbReference>
<dbReference type="Pfam" id="PF00654">
    <property type="entry name" value="Voltage_CLC"/>
    <property type="match status" value="1"/>
</dbReference>
<dbReference type="PRINTS" id="PR00762">
    <property type="entry name" value="CLCHANNEL"/>
</dbReference>
<dbReference type="SUPFAM" id="SSF81340">
    <property type="entry name" value="Clc chloride channel"/>
    <property type="match status" value="1"/>
</dbReference>
<evidence type="ECO:0000255" key="1">
    <source>
        <dbReference type="HAMAP-Rule" id="MF_01128"/>
    </source>
</evidence>
<gene>
    <name evidence="1" type="primary">clcA</name>
    <name evidence="1" type="synonym">eriC</name>
    <name type="ordered locus">ECIAI39_0159</name>
</gene>
<organism>
    <name type="scientific">Escherichia coli O7:K1 (strain IAI39 / ExPEC)</name>
    <dbReference type="NCBI Taxonomy" id="585057"/>
    <lineage>
        <taxon>Bacteria</taxon>
        <taxon>Pseudomonadati</taxon>
        <taxon>Pseudomonadota</taxon>
        <taxon>Gammaproteobacteria</taxon>
        <taxon>Enterobacterales</taxon>
        <taxon>Enterobacteriaceae</taxon>
        <taxon>Escherichia</taxon>
    </lineage>
</organism>
<feature type="chain" id="PRO_1000137295" description="H(+)/Cl(-) exchange transporter ClcA">
    <location>
        <begin position="1"/>
        <end position="473"/>
    </location>
</feature>
<feature type="topological domain" description="Cytoplasmic" evidence="1">
    <location>
        <begin position="1"/>
        <end position="32"/>
    </location>
</feature>
<feature type="transmembrane region" description="Helical" evidence="1">
    <location>
        <begin position="33"/>
        <end position="69"/>
    </location>
</feature>
<feature type="topological domain" description="Periplasmic" evidence="1">
    <location>
        <begin position="70"/>
        <end position="76"/>
    </location>
</feature>
<feature type="transmembrane region" description="Helical" evidence="1">
    <location>
        <begin position="77"/>
        <end position="100"/>
    </location>
</feature>
<feature type="intramembrane region" description="Helical" evidence="1">
    <location>
        <begin position="109"/>
        <end position="116"/>
    </location>
</feature>
<feature type="topological domain" description="Cytoplasmic" evidence="1">
    <location>
        <begin position="117"/>
        <end position="123"/>
    </location>
</feature>
<feature type="transmembrane region" description="Helical" evidence="1">
    <location>
        <begin position="124"/>
        <end position="141"/>
    </location>
</feature>
<feature type="transmembrane region" description="Helical" evidence="1">
    <location>
        <begin position="148"/>
        <end position="166"/>
    </location>
</feature>
<feature type="topological domain" description="Cytoplasmic" evidence="1">
    <location>
        <begin position="167"/>
        <end position="176"/>
    </location>
</feature>
<feature type="intramembrane region" description="Helical" evidence="1">
    <location>
        <begin position="177"/>
        <end position="189"/>
    </location>
</feature>
<feature type="intramembrane region" description="Helical" evidence="1">
    <location>
        <begin position="193"/>
        <end position="201"/>
    </location>
</feature>
<feature type="topological domain" description="Cytoplasmic" evidence="1">
    <location>
        <begin position="202"/>
        <end position="214"/>
    </location>
</feature>
<feature type="transmembrane region" description="Helical" evidence="1">
    <location>
        <begin position="215"/>
        <end position="232"/>
    </location>
</feature>
<feature type="topological domain" description="Periplasmic" evidence="1">
    <location>
        <begin position="233"/>
        <end position="252"/>
    </location>
</feature>
<feature type="transmembrane region" description="Helical" evidence="1">
    <location>
        <begin position="253"/>
        <end position="281"/>
    </location>
</feature>
<feature type="topological domain" description="Cytoplasmic" evidence="1">
    <location>
        <begin position="282"/>
        <end position="287"/>
    </location>
</feature>
<feature type="transmembrane region" description="Helical" evidence="1">
    <location>
        <begin position="288"/>
        <end position="309"/>
    </location>
</feature>
<feature type="topological domain" description="Periplasmic" evidence="1">
    <location>
        <begin position="310"/>
        <end position="329"/>
    </location>
</feature>
<feature type="transmembrane region" description="Helical" evidence="1">
    <location>
        <begin position="330"/>
        <end position="349"/>
    </location>
</feature>
<feature type="transmembrane region" description="Helical" evidence="1">
    <location>
        <begin position="355"/>
        <end position="376"/>
    </location>
</feature>
<feature type="topological domain" description="Periplasmic" evidence="1">
    <location>
        <begin position="377"/>
        <end position="386"/>
    </location>
</feature>
<feature type="intramembrane region" description="Helical" evidence="1">
    <location>
        <begin position="387"/>
        <end position="401"/>
    </location>
</feature>
<feature type="intramembrane region" description="Note=Loop between two helices" evidence="1">
    <location>
        <begin position="402"/>
        <end position="404"/>
    </location>
</feature>
<feature type="intramembrane region" description="Helical" evidence="1">
    <location>
        <begin position="405"/>
        <end position="416"/>
    </location>
</feature>
<feature type="intramembrane region" description="Note=Loop between two helices" evidence="1">
    <location>
        <begin position="417"/>
        <end position="421"/>
    </location>
</feature>
<feature type="transmembrane region" description="Helical" evidence="1">
    <location>
        <begin position="422"/>
        <end position="438"/>
    </location>
</feature>
<feature type="topological domain" description="Cytoplasmic" evidence="1">
    <location>
        <begin position="439"/>
        <end position="473"/>
    </location>
</feature>
<feature type="short sequence motif" description="Selectivity filter part_1" evidence="1">
    <location>
        <begin position="106"/>
        <end position="110"/>
    </location>
</feature>
<feature type="short sequence motif" description="Selectivity filter part_2" evidence="1">
    <location>
        <begin position="146"/>
        <end position="150"/>
    </location>
</feature>
<feature type="short sequence motif" description="Selectivity filter part_3" evidence="1">
    <location>
        <begin position="355"/>
        <end position="359"/>
    </location>
</feature>
<feature type="binding site" evidence="1">
    <location>
        <position position="107"/>
    </location>
    <ligand>
        <name>chloride</name>
        <dbReference type="ChEBI" id="CHEBI:17996"/>
    </ligand>
</feature>
<feature type="binding site" evidence="1">
    <location>
        <position position="356"/>
    </location>
    <ligand>
        <name>chloride</name>
        <dbReference type="ChEBI" id="CHEBI:17996"/>
    </ligand>
</feature>
<feature type="binding site" evidence="1">
    <location>
        <position position="357"/>
    </location>
    <ligand>
        <name>chloride</name>
        <dbReference type="ChEBI" id="CHEBI:17996"/>
    </ligand>
</feature>
<feature type="binding site" evidence="1">
    <location>
        <position position="445"/>
    </location>
    <ligand>
        <name>chloride</name>
        <dbReference type="ChEBI" id="CHEBI:17996"/>
    </ligand>
</feature>
<feature type="site" description="Mediates proton transfer from the outer aqueous phase to the interior of the protein; involved in linking H(+) and Cl(-) transport" evidence="1">
    <location>
        <position position="148"/>
    </location>
</feature>
<feature type="site" description="Mediates proton transfer from the protein to the inner aqueous phase" evidence="1">
    <location>
        <position position="203"/>
    </location>
</feature>
<reference key="1">
    <citation type="journal article" date="2009" name="PLoS Genet.">
        <title>Organised genome dynamics in the Escherichia coli species results in highly diverse adaptive paths.</title>
        <authorList>
            <person name="Touchon M."/>
            <person name="Hoede C."/>
            <person name="Tenaillon O."/>
            <person name="Barbe V."/>
            <person name="Baeriswyl S."/>
            <person name="Bidet P."/>
            <person name="Bingen E."/>
            <person name="Bonacorsi S."/>
            <person name="Bouchier C."/>
            <person name="Bouvet O."/>
            <person name="Calteau A."/>
            <person name="Chiapello H."/>
            <person name="Clermont O."/>
            <person name="Cruveiller S."/>
            <person name="Danchin A."/>
            <person name="Diard M."/>
            <person name="Dossat C."/>
            <person name="Karoui M.E."/>
            <person name="Frapy E."/>
            <person name="Garry L."/>
            <person name="Ghigo J.M."/>
            <person name="Gilles A.M."/>
            <person name="Johnson J."/>
            <person name="Le Bouguenec C."/>
            <person name="Lescat M."/>
            <person name="Mangenot S."/>
            <person name="Martinez-Jehanne V."/>
            <person name="Matic I."/>
            <person name="Nassif X."/>
            <person name="Oztas S."/>
            <person name="Petit M.A."/>
            <person name="Pichon C."/>
            <person name="Rouy Z."/>
            <person name="Ruf C.S."/>
            <person name="Schneider D."/>
            <person name="Tourret J."/>
            <person name="Vacherie B."/>
            <person name="Vallenet D."/>
            <person name="Medigue C."/>
            <person name="Rocha E.P.C."/>
            <person name="Denamur E."/>
        </authorList>
    </citation>
    <scope>NUCLEOTIDE SEQUENCE [LARGE SCALE GENOMIC DNA]</scope>
    <source>
        <strain>IAI39 / ExPEC</strain>
    </source>
</reference>
<protein>
    <recommendedName>
        <fullName evidence="1">H(+)/Cl(-) exchange transporter ClcA</fullName>
    </recommendedName>
</protein>
<accession>B7NIB8</accession>